<gene>
    <name evidence="1" type="primary">mdtK</name>
    <name type="ordered locus">CKO_01679</name>
</gene>
<sequence length="457" mass="49430">MQKYISEARQLLALAIPVILAQIAQTAMGFVDTVMAGGYSATDMAAVAIGTSIWLPAILFGHGLLLALTPVIAQLNGSGRRERIAHQVRQGFWLAGCVSVLIMFVLWNAGYIIRSMHNIDPALADKAVGYLRALLWGAPGYLFFQVARNQCEGLAKTKPGMVIGFLGLLVNIPVNYIFIYGHFGMPELGGVGCGVATAAVYWVMFIAMASYVKRARSMRDIRNERGFSKPDTAVMKRLVQLGLPIALALFFEVTLFAVVALLVSPLGIVDVAGHQIALNFSSLMFVLPMSLAAAVTIRVGYRLGQGSTLDAQTAARTGLGVGVCMAVITAIFTVTLREPIALLYNDNPEVVTLAAQLMLLAAVYQISDSIQVIGSGILRGYKDTRSIFFITFTAYWVLGLPSGYILALTDLVVDRMGPAGFWMGFIIGLTSAAIMMMLRMRYLQRQSSAIILQRAAR</sequence>
<keyword id="KW-0050">Antiport</keyword>
<keyword id="KW-0997">Cell inner membrane</keyword>
<keyword id="KW-1003">Cell membrane</keyword>
<keyword id="KW-0406">Ion transport</keyword>
<keyword id="KW-0472">Membrane</keyword>
<keyword id="KW-1185">Reference proteome</keyword>
<keyword id="KW-0915">Sodium</keyword>
<keyword id="KW-0739">Sodium transport</keyword>
<keyword id="KW-0812">Transmembrane</keyword>
<keyword id="KW-1133">Transmembrane helix</keyword>
<keyword id="KW-0813">Transport</keyword>
<reference key="1">
    <citation type="submission" date="2007-08" db="EMBL/GenBank/DDBJ databases">
        <authorList>
            <consortium name="The Citrobacter koseri Genome Sequencing Project"/>
            <person name="McClelland M."/>
            <person name="Sanderson E.K."/>
            <person name="Porwollik S."/>
            <person name="Spieth J."/>
            <person name="Clifton W.S."/>
            <person name="Latreille P."/>
            <person name="Courtney L."/>
            <person name="Wang C."/>
            <person name="Pepin K."/>
            <person name="Bhonagiri V."/>
            <person name="Nash W."/>
            <person name="Johnson M."/>
            <person name="Thiruvilangam P."/>
            <person name="Wilson R."/>
        </authorList>
    </citation>
    <scope>NUCLEOTIDE SEQUENCE [LARGE SCALE GENOMIC DNA]</scope>
    <source>
        <strain>ATCC BAA-895 / CDC 4225-83 / SGSC4696</strain>
    </source>
</reference>
<evidence type="ECO:0000255" key="1">
    <source>
        <dbReference type="HAMAP-Rule" id="MF_00400"/>
    </source>
</evidence>
<protein>
    <recommendedName>
        <fullName evidence="1">Multidrug resistance protein MdtK</fullName>
    </recommendedName>
    <alternativeName>
        <fullName evidence="1">Multidrug-efflux transporter</fullName>
    </alternativeName>
</protein>
<dbReference type="EMBL" id="CP000822">
    <property type="protein sequence ID" value="ABV12811.1"/>
    <property type="molecule type" value="Genomic_DNA"/>
</dbReference>
<dbReference type="RefSeq" id="WP_012132551.1">
    <property type="nucleotide sequence ID" value="NC_009792.1"/>
</dbReference>
<dbReference type="SMR" id="A8AH48"/>
<dbReference type="STRING" id="290338.CKO_01679"/>
<dbReference type="GeneID" id="45135716"/>
<dbReference type="KEGG" id="cko:CKO_01679"/>
<dbReference type="HOGENOM" id="CLU_012893_6_0_6"/>
<dbReference type="OrthoDB" id="9780160at2"/>
<dbReference type="Proteomes" id="UP000008148">
    <property type="component" value="Chromosome"/>
</dbReference>
<dbReference type="GO" id="GO:0005886">
    <property type="term" value="C:plasma membrane"/>
    <property type="evidence" value="ECO:0007669"/>
    <property type="project" value="UniProtKB-SubCell"/>
</dbReference>
<dbReference type="GO" id="GO:0015297">
    <property type="term" value="F:antiporter activity"/>
    <property type="evidence" value="ECO:0007669"/>
    <property type="project" value="UniProtKB-UniRule"/>
</dbReference>
<dbReference type="GO" id="GO:0042910">
    <property type="term" value="F:xenobiotic transmembrane transporter activity"/>
    <property type="evidence" value="ECO:0007669"/>
    <property type="project" value="UniProtKB-UniRule"/>
</dbReference>
<dbReference type="GO" id="GO:0006814">
    <property type="term" value="P:sodium ion transport"/>
    <property type="evidence" value="ECO:0007669"/>
    <property type="project" value="UniProtKB-UniRule"/>
</dbReference>
<dbReference type="GO" id="GO:0006855">
    <property type="term" value="P:xenobiotic transmembrane transport"/>
    <property type="evidence" value="ECO:0007669"/>
    <property type="project" value="UniProtKB-UniRule"/>
</dbReference>
<dbReference type="CDD" id="cd13131">
    <property type="entry name" value="MATE_NorM_like"/>
    <property type="match status" value="1"/>
</dbReference>
<dbReference type="HAMAP" id="MF_00400">
    <property type="entry name" value="MdtK"/>
    <property type="match status" value="1"/>
</dbReference>
<dbReference type="InterPro" id="IPR002528">
    <property type="entry name" value="MATE_fam"/>
</dbReference>
<dbReference type="InterPro" id="IPR050222">
    <property type="entry name" value="MATE_MdtK"/>
</dbReference>
<dbReference type="InterPro" id="IPR048279">
    <property type="entry name" value="MdtK-like"/>
</dbReference>
<dbReference type="InterPro" id="IPR022913">
    <property type="entry name" value="Multidrug-R_MdtK"/>
</dbReference>
<dbReference type="NCBIfam" id="TIGR00797">
    <property type="entry name" value="matE"/>
    <property type="match status" value="1"/>
</dbReference>
<dbReference type="PANTHER" id="PTHR43298:SF2">
    <property type="entry name" value="FMN_FAD EXPORTER YEEO-RELATED"/>
    <property type="match status" value="1"/>
</dbReference>
<dbReference type="PANTHER" id="PTHR43298">
    <property type="entry name" value="MULTIDRUG RESISTANCE PROTEIN NORM-RELATED"/>
    <property type="match status" value="1"/>
</dbReference>
<dbReference type="Pfam" id="PF01554">
    <property type="entry name" value="MatE"/>
    <property type="match status" value="2"/>
</dbReference>
<dbReference type="PIRSF" id="PIRSF006603">
    <property type="entry name" value="DinF"/>
    <property type="match status" value="1"/>
</dbReference>
<name>MDTK_CITK8</name>
<accession>A8AH48</accession>
<feature type="chain" id="PRO_1000049612" description="Multidrug resistance protein MdtK">
    <location>
        <begin position="1"/>
        <end position="457"/>
    </location>
</feature>
<feature type="transmembrane region" description="Helical" evidence="1">
    <location>
        <begin position="11"/>
        <end position="31"/>
    </location>
</feature>
<feature type="transmembrane region" description="Helical" evidence="1">
    <location>
        <begin position="53"/>
        <end position="73"/>
    </location>
</feature>
<feature type="transmembrane region" description="Helical" evidence="1">
    <location>
        <begin position="93"/>
        <end position="113"/>
    </location>
</feature>
<feature type="transmembrane region" description="Helical" evidence="1">
    <location>
        <begin position="127"/>
        <end position="147"/>
    </location>
</feature>
<feature type="transmembrane region" description="Helical" evidence="1">
    <location>
        <begin position="160"/>
        <end position="180"/>
    </location>
</feature>
<feature type="transmembrane region" description="Helical" evidence="1">
    <location>
        <begin position="188"/>
        <end position="208"/>
    </location>
</feature>
<feature type="transmembrane region" description="Helical" evidence="1">
    <location>
        <begin position="243"/>
        <end position="263"/>
    </location>
</feature>
<feature type="transmembrane region" description="Helical" evidence="1">
    <location>
        <begin position="276"/>
        <end position="296"/>
    </location>
</feature>
<feature type="transmembrane region" description="Helical" evidence="1">
    <location>
        <begin position="314"/>
        <end position="334"/>
    </location>
</feature>
<feature type="transmembrane region" description="Helical" evidence="1">
    <location>
        <begin position="357"/>
        <end position="377"/>
    </location>
</feature>
<feature type="transmembrane region" description="Helical" evidence="1">
    <location>
        <begin position="387"/>
        <end position="407"/>
    </location>
</feature>
<feature type="transmembrane region" description="Helical" evidence="1">
    <location>
        <begin position="418"/>
        <end position="438"/>
    </location>
</feature>
<comment type="function">
    <text evidence="1">Multidrug efflux pump that functions probably as a Na(+)/drug antiporter.</text>
</comment>
<comment type="subcellular location">
    <subcellularLocation>
        <location evidence="1">Cell inner membrane</location>
        <topology evidence="1">Multi-pass membrane protein</topology>
    </subcellularLocation>
</comment>
<comment type="similarity">
    <text evidence="1">Belongs to the multi antimicrobial extrusion (MATE) (TC 2.A.66.1) family. MdtK subfamily.</text>
</comment>
<organism>
    <name type="scientific">Citrobacter koseri (strain ATCC BAA-895 / CDC 4225-83 / SGSC4696)</name>
    <dbReference type="NCBI Taxonomy" id="290338"/>
    <lineage>
        <taxon>Bacteria</taxon>
        <taxon>Pseudomonadati</taxon>
        <taxon>Pseudomonadota</taxon>
        <taxon>Gammaproteobacteria</taxon>
        <taxon>Enterobacterales</taxon>
        <taxon>Enterobacteriaceae</taxon>
        <taxon>Citrobacter</taxon>
    </lineage>
</organism>
<proteinExistence type="inferred from homology"/>